<feature type="chain" id="PRO_1000006723" description="Aspartate--tRNA(Asp/Asn) ligase">
    <location>
        <begin position="1"/>
        <end position="598"/>
    </location>
</feature>
<feature type="region of interest" description="Aspartate" evidence="1">
    <location>
        <begin position="201"/>
        <end position="204"/>
    </location>
</feature>
<feature type="binding site" evidence="1">
    <location>
        <position position="177"/>
    </location>
    <ligand>
        <name>L-aspartate</name>
        <dbReference type="ChEBI" id="CHEBI:29991"/>
    </ligand>
</feature>
<feature type="binding site" evidence="1">
    <location>
        <begin position="223"/>
        <end position="225"/>
    </location>
    <ligand>
        <name>ATP</name>
        <dbReference type="ChEBI" id="CHEBI:30616"/>
    </ligand>
</feature>
<feature type="binding site" evidence="1">
    <location>
        <position position="223"/>
    </location>
    <ligand>
        <name>L-aspartate</name>
        <dbReference type="ChEBI" id="CHEBI:29991"/>
    </ligand>
</feature>
<feature type="binding site" evidence="1">
    <location>
        <position position="232"/>
    </location>
    <ligand>
        <name>ATP</name>
        <dbReference type="ChEBI" id="CHEBI:30616"/>
    </ligand>
</feature>
<feature type="binding site" evidence="1">
    <location>
        <position position="456"/>
    </location>
    <ligand>
        <name>L-aspartate</name>
        <dbReference type="ChEBI" id="CHEBI:29991"/>
    </ligand>
</feature>
<feature type="binding site" evidence="1">
    <location>
        <position position="493"/>
    </location>
    <ligand>
        <name>ATP</name>
        <dbReference type="ChEBI" id="CHEBI:30616"/>
    </ligand>
</feature>
<feature type="binding site" evidence="1">
    <location>
        <position position="500"/>
    </location>
    <ligand>
        <name>L-aspartate</name>
        <dbReference type="ChEBI" id="CHEBI:29991"/>
    </ligand>
</feature>
<feature type="binding site" evidence="1">
    <location>
        <begin position="545"/>
        <end position="548"/>
    </location>
    <ligand>
        <name>ATP</name>
        <dbReference type="ChEBI" id="CHEBI:30616"/>
    </ligand>
</feature>
<feature type="site" description="Important for tRNA non-discrimination" evidence="1">
    <location>
        <position position="30"/>
    </location>
</feature>
<sequence length="598" mass="67656">MRNKICKELNNTDIGKLVNLCGWVDRRRDHGGVIFIDLRDHSGFLQITINPDDGAALFKQAETLRNETVIMVSGIINERPKDSINTNLSTGELELKVKDLQILNQIKKNLPFPVSIHDYENTKEELRLKYRYLDLRRGKLLENLKTRHKIIKVAREFLDNFGFTEVETPLLTKSTPEGARDFLVPARLSNGEFFALPQSPQLFKQLLMVGGLDKYYQIAKCFRDEDLRADRQPEFTQLDIEMSFISEEEIISFNESLIKKIWKEVLNIKFNNAFPRMSWQEAMDNYGTDRPDTRYQMLLKDLGGILGDIGFNIFTKAIKSGGYIKSITVKGGNSSISNVRIKPGGDIFQVAKDAGAGGLAFIRVKGDELETIGAIKNNLSEEHIADILKITEAKDGDLILLGAGDKLIVNQSLDRVRQYIAKDLNLIDKSKWNFLWVTDFPMFERNEEENRYEALHHPFCSPKNIKSKDSENLKKEIESSTANAYDLVLNGLELGGGSLRIHEANLQREVLKMVGLTDKEIDEKFGFLIEALEMGAPPHGGIAFGLDRITMLIIGTDSIRETIAFPKNQQAKCLLTNAPSNVSESQLKELDIEITIDE</sequence>
<reference key="1">
    <citation type="journal article" date="2007" name="PLoS Genet.">
        <title>Patterns and implications of gene gain and loss in the evolution of Prochlorococcus.</title>
        <authorList>
            <person name="Kettler G.C."/>
            <person name="Martiny A.C."/>
            <person name="Huang K."/>
            <person name="Zucker J."/>
            <person name="Coleman M.L."/>
            <person name="Rodrigue S."/>
            <person name="Chen F."/>
            <person name="Lapidus A."/>
            <person name="Ferriera S."/>
            <person name="Johnson J."/>
            <person name="Steglich C."/>
            <person name="Church G.M."/>
            <person name="Richardson P."/>
            <person name="Chisholm S.W."/>
        </authorList>
    </citation>
    <scope>NUCLEOTIDE SEQUENCE [LARGE SCALE GENOMIC DNA]</scope>
    <source>
        <strain>MIT 9301</strain>
    </source>
</reference>
<comment type="function">
    <text evidence="1">Aspartyl-tRNA synthetase with relaxed tRNA specificity since it is able to aspartylate not only its cognate tRNA(Asp) but also tRNA(Asn). Reaction proceeds in two steps: L-aspartate is first activated by ATP to form Asp-AMP and then transferred to the acceptor end of tRNA(Asp/Asn).</text>
</comment>
<comment type="catalytic activity">
    <reaction evidence="1">
        <text>tRNA(Asx) + L-aspartate + ATP = L-aspartyl-tRNA(Asx) + AMP + diphosphate</text>
        <dbReference type="Rhea" id="RHEA:18349"/>
        <dbReference type="Rhea" id="RHEA-COMP:9710"/>
        <dbReference type="Rhea" id="RHEA-COMP:9711"/>
        <dbReference type="ChEBI" id="CHEBI:29991"/>
        <dbReference type="ChEBI" id="CHEBI:30616"/>
        <dbReference type="ChEBI" id="CHEBI:33019"/>
        <dbReference type="ChEBI" id="CHEBI:78442"/>
        <dbReference type="ChEBI" id="CHEBI:78516"/>
        <dbReference type="ChEBI" id="CHEBI:456215"/>
        <dbReference type="EC" id="6.1.1.23"/>
    </reaction>
</comment>
<comment type="subunit">
    <text evidence="1">Homodimer.</text>
</comment>
<comment type="subcellular location">
    <subcellularLocation>
        <location evidence="1">Cytoplasm</location>
    </subcellularLocation>
</comment>
<comment type="similarity">
    <text evidence="1">Belongs to the class-II aminoacyl-tRNA synthetase family. Type 1 subfamily.</text>
</comment>
<evidence type="ECO:0000255" key="1">
    <source>
        <dbReference type="HAMAP-Rule" id="MF_00044"/>
    </source>
</evidence>
<name>SYDND_PROM0</name>
<protein>
    <recommendedName>
        <fullName evidence="1">Aspartate--tRNA(Asp/Asn) ligase</fullName>
        <ecNumber evidence="1">6.1.1.23</ecNumber>
    </recommendedName>
    <alternativeName>
        <fullName evidence="1">Aspartyl-tRNA synthetase</fullName>
        <shortName evidence="1">AspRS</shortName>
    </alternativeName>
    <alternativeName>
        <fullName evidence="1">Non-discriminating aspartyl-tRNA synthetase</fullName>
        <shortName evidence="1">ND-AspRS</shortName>
    </alternativeName>
</protein>
<accession>A3PFH7</accession>
<gene>
    <name evidence="1" type="primary">aspS</name>
    <name type="ordered locus">P9301_18791</name>
</gene>
<dbReference type="EC" id="6.1.1.23" evidence="1"/>
<dbReference type="EMBL" id="CP000576">
    <property type="protein sequence ID" value="ABO18502.1"/>
    <property type="molecule type" value="Genomic_DNA"/>
</dbReference>
<dbReference type="RefSeq" id="WP_011863784.1">
    <property type="nucleotide sequence ID" value="NC_009091.1"/>
</dbReference>
<dbReference type="SMR" id="A3PFH7"/>
<dbReference type="STRING" id="167546.P9301_18791"/>
<dbReference type="KEGG" id="pmg:P9301_18791"/>
<dbReference type="eggNOG" id="COG0173">
    <property type="taxonomic scope" value="Bacteria"/>
</dbReference>
<dbReference type="HOGENOM" id="CLU_014330_3_2_3"/>
<dbReference type="OrthoDB" id="9802326at2"/>
<dbReference type="Proteomes" id="UP000001430">
    <property type="component" value="Chromosome"/>
</dbReference>
<dbReference type="GO" id="GO:0005737">
    <property type="term" value="C:cytoplasm"/>
    <property type="evidence" value="ECO:0007669"/>
    <property type="project" value="UniProtKB-SubCell"/>
</dbReference>
<dbReference type="GO" id="GO:0004815">
    <property type="term" value="F:aspartate-tRNA ligase activity"/>
    <property type="evidence" value="ECO:0007669"/>
    <property type="project" value="UniProtKB-UniRule"/>
</dbReference>
<dbReference type="GO" id="GO:0050560">
    <property type="term" value="F:aspartate-tRNA(Asn) ligase activity"/>
    <property type="evidence" value="ECO:0007669"/>
    <property type="project" value="UniProtKB-EC"/>
</dbReference>
<dbReference type="GO" id="GO:0005524">
    <property type="term" value="F:ATP binding"/>
    <property type="evidence" value="ECO:0007669"/>
    <property type="project" value="UniProtKB-UniRule"/>
</dbReference>
<dbReference type="GO" id="GO:0003676">
    <property type="term" value="F:nucleic acid binding"/>
    <property type="evidence" value="ECO:0007669"/>
    <property type="project" value="InterPro"/>
</dbReference>
<dbReference type="GO" id="GO:0006422">
    <property type="term" value="P:aspartyl-tRNA aminoacylation"/>
    <property type="evidence" value="ECO:0007669"/>
    <property type="project" value="UniProtKB-UniRule"/>
</dbReference>
<dbReference type="CDD" id="cd00777">
    <property type="entry name" value="AspRS_core"/>
    <property type="match status" value="1"/>
</dbReference>
<dbReference type="CDD" id="cd04317">
    <property type="entry name" value="EcAspRS_like_N"/>
    <property type="match status" value="1"/>
</dbReference>
<dbReference type="Gene3D" id="3.30.930.10">
    <property type="entry name" value="Bira Bifunctional Protein, Domain 2"/>
    <property type="match status" value="1"/>
</dbReference>
<dbReference type="Gene3D" id="3.30.1360.30">
    <property type="entry name" value="GAD-like domain"/>
    <property type="match status" value="1"/>
</dbReference>
<dbReference type="Gene3D" id="2.40.50.140">
    <property type="entry name" value="Nucleic acid-binding proteins"/>
    <property type="match status" value="1"/>
</dbReference>
<dbReference type="HAMAP" id="MF_00044">
    <property type="entry name" value="Asp_tRNA_synth_type1"/>
    <property type="match status" value="1"/>
</dbReference>
<dbReference type="InterPro" id="IPR004364">
    <property type="entry name" value="Aa-tRNA-synt_II"/>
</dbReference>
<dbReference type="InterPro" id="IPR006195">
    <property type="entry name" value="aa-tRNA-synth_II"/>
</dbReference>
<dbReference type="InterPro" id="IPR045864">
    <property type="entry name" value="aa-tRNA-synth_II/BPL/LPL"/>
</dbReference>
<dbReference type="InterPro" id="IPR004524">
    <property type="entry name" value="Asp-tRNA-ligase_1"/>
</dbReference>
<dbReference type="InterPro" id="IPR047089">
    <property type="entry name" value="Asp-tRNA-ligase_1_N"/>
</dbReference>
<dbReference type="InterPro" id="IPR002312">
    <property type="entry name" value="Asp/Asn-tRNA-synth_IIb"/>
</dbReference>
<dbReference type="InterPro" id="IPR047090">
    <property type="entry name" value="AspRS_core"/>
</dbReference>
<dbReference type="InterPro" id="IPR004115">
    <property type="entry name" value="GAD-like_sf"/>
</dbReference>
<dbReference type="InterPro" id="IPR029351">
    <property type="entry name" value="GAD_dom"/>
</dbReference>
<dbReference type="InterPro" id="IPR012340">
    <property type="entry name" value="NA-bd_OB-fold"/>
</dbReference>
<dbReference type="InterPro" id="IPR004365">
    <property type="entry name" value="NA-bd_OB_tRNA"/>
</dbReference>
<dbReference type="NCBIfam" id="TIGR00459">
    <property type="entry name" value="aspS_bact"/>
    <property type="match status" value="1"/>
</dbReference>
<dbReference type="NCBIfam" id="NF001750">
    <property type="entry name" value="PRK00476.1"/>
    <property type="match status" value="1"/>
</dbReference>
<dbReference type="PANTHER" id="PTHR22594:SF5">
    <property type="entry name" value="ASPARTATE--TRNA LIGASE, MITOCHONDRIAL"/>
    <property type="match status" value="1"/>
</dbReference>
<dbReference type="PANTHER" id="PTHR22594">
    <property type="entry name" value="ASPARTYL/LYSYL-TRNA SYNTHETASE"/>
    <property type="match status" value="1"/>
</dbReference>
<dbReference type="Pfam" id="PF02938">
    <property type="entry name" value="GAD"/>
    <property type="match status" value="1"/>
</dbReference>
<dbReference type="Pfam" id="PF00152">
    <property type="entry name" value="tRNA-synt_2"/>
    <property type="match status" value="1"/>
</dbReference>
<dbReference type="Pfam" id="PF01336">
    <property type="entry name" value="tRNA_anti-codon"/>
    <property type="match status" value="1"/>
</dbReference>
<dbReference type="PRINTS" id="PR01042">
    <property type="entry name" value="TRNASYNTHASP"/>
</dbReference>
<dbReference type="SUPFAM" id="SSF55681">
    <property type="entry name" value="Class II aaRS and biotin synthetases"/>
    <property type="match status" value="1"/>
</dbReference>
<dbReference type="SUPFAM" id="SSF55261">
    <property type="entry name" value="GAD domain-like"/>
    <property type="match status" value="1"/>
</dbReference>
<dbReference type="SUPFAM" id="SSF50249">
    <property type="entry name" value="Nucleic acid-binding proteins"/>
    <property type="match status" value="1"/>
</dbReference>
<dbReference type="PROSITE" id="PS50862">
    <property type="entry name" value="AA_TRNA_LIGASE_II"/>
    <property type="match status" value="1"/>
</dbReference>
<keyword id="KW-0030">Aminoacyl-tRNA synthetase</keyword>
<keyword id="KW-0067">ATP-binding</keyword>
<keyword id="KW-0963">Cytoplasm</keyword>
<keyword id="KW-0436">Ligase</keyword>
<keyword id="KW-0547">Nucleotide-binding</keyword>
<keyword id="KW-0648">Protein biosynthesis</keyword>
<keyword id="KW-1185">Reference proteome</keyword>
<organism>
    <name type="scientific">Prochlorococcus marinus (strain MIT 9301)</name>
    <dbReference type="NCBI Taxonomy" id="167546"/>
    <lineage>
        <taxon>Bacteria</taxon>
        <taxon>Bacillati</taxon>
        <taxon>Cyanobacteriota</taxon>
        <taxon>Cyanophyceae</taxon>
        <taxon>Synechococcales</taxon>
        <taxon>Prochlorococcaceae</taxon>
        <taxon>Prochlorococcus</taxon>
    </lineage>
</organism>
<proteinExistence type="inferred from homology"/>